<evidence type="ECO:0000269" key="1">
    <source>
    </source>
</evidence>
<evidence type="ECO:0000303" key="2">
    <source>
    </source>
</evidence>
<evidence type="ECO:0000305" key="3"/>
<evidence type="ECO:0000305" key="4">
    <source>
    </source>
</evidence>
<comment type="function">
    <text evidence="1 4">Hydroxylase/desaturase; part of the gene cluster that mediates the biosynthesis of enfumafungin, a glycosylated fernene-type triterpenoid with potent antifungal activity, mediated by its interaction with beta-1,3-glucan synthase and the fungal cell wall (PubMed:30051576). The pathway begins with the terpene cyclase-glycosyl transferase fusion protein that most likely uses 2,3-oxidosqualene as substrate and catalyzes glycosylation immediately after cyclization (Probable). The fernene glycoside then could be processed by the desaturase efuI which catalyzes isomerization of a double bond established by efuA to form the core structure (Probable). The latter would then undergo a series of hydroxylations in unknown order at C-2, C-19, C-23 and C-25, which would be catalyzed by two of the three cytochrome P450 monooxygenases efuB, efuG or efuH (Probable). The hydroxy-group at C-25 becomes oxidized by the dehydrogenase efuE to enable a spontaneous, non-enzymatic hemiacetal formation with C-23 (Probable). After hydroxylation at C-2, acetylation by the acetyltransferase efuC takes place (Probable). The final steps in enfumafungin biosynthesis require expansion of the 5-membered ring by lactonization via a Baeyer-Villiger reaction mediated by one of the BGC's cytochrome P450 monooxygenases (efuB, efuG or efuH) followed by ring cleavage (Probable). This type of reaction would establish a double bond between C-20 and C-21 which could be reduced by the reductase efuL to form the final product (Probable).</text>
</comment>
<comment type="pathway">
    <text evidence="4">Secondary metabolite biosynthesis; terpenoid biosynthesis.</text>
</comment>
<comment type="similarity">
    <text evidence="3">Belongs to the asaB hydroxylase/desaturase family.</text>
</comment>
<accession>A0A2Z4HPZ8</accession>
<name>EFUI_HORCR</name>
<dbReference type="EC" id="1.-.-.-" evidence="4"/>
<dbReference type="EMBL" id="MF611891">
    <property type="protein sequence ID" value="AWW17219.1"/>
    <property type="molecule type" value="Genomic_DNA"/>
</dbReference>
<dbReference type="SMR" id="A0A2Z4HPZ8"/>
<dbReference type="UniPathway" id="UPA00213"/>
<dbReference type="GO" id="GO:0016491">
    <property type="term" value="F:oxidoreductase activity"/>
    <property type="evidence" value="ECO:0007669"/>
    <property type="project" value="UniProtKB-KW"/>
</dbReference>
<dbReference type="GO" id="GO:0016114">
    <property type="term" value="P:terpenoid biosynthetic process"/>
    <property type="evidence" value="ECO:0007669"/>
    <property type="project" value="UniProtKB-UniPathway"/>
</dbReference>
<dbReference type="InterPro" id="IPR044053">
    <property type="entry name" value="AsaB-like"/>
</dbReference>
<dbReference type="NCBIfam" id="NF041278">
    <property type="entry name" value="CmcJ_NvfI_EfuI"/>
    <property type="match status" value="1"/>
</dbReference>
<dbReference type="PANTHER" id="PTHR34598">
    <property type="entry name" value="BLL6449 PROTEIN"/>
    <property type="match status" value="1"/>
</dbReference>
<dbReference type="PANTHER" id="PTHR34598:SF3">
    <property type="entry name" value="OXIDOREDUCTASE AN1597"/>
    <property type="match status" value="1"/>
</dbReference>
<keyword id="KW-0560">Oxidoreductase</keyword>
<proteinExistence type="inferred from homology"/>
<protein>
    <recommendedName>
        <fullName evidence="2">Hydroxylase/desaturase efuI</fullName>
        <ecNumber evidence="4">1.-.-.-</ecNumber>
    </recommendedName>
    <alternativeName>
        <fullName evidence="2">Enfumafungin biosynthesis cluster protein I</fullName>
    </alternativeName>
</protein>
<gene>
    <name evidence="2" type="primary">efuI</name>
</gene>
<reference key="1">
    <citation type="journal article" date="2018" name="Environ. Microbiol.">
        <title>Enfumafungin synthase represents a novel lineage of fungal triterpene cyclases.</title>
        <authorList>
            <person name="Kuhnert E."/>
            <person name="Li Y."/>
            <person name="Lan N."/>
            <person name="Yue Q."/>
            <person name="Chen L."/>
            <person name="Cox R.J."/>
            <person name="An Z."/>
            <person name="Yokoyama K."/>
            <person name="Bills G.F."/>
        </authorList>
    </citation>
    <scope>NUCLEOTIDE SEQUENCE [GENOMIC DNA]</scope>
    <scope>FUNCTION</scope>
    <scope>PATHWAY</scope>
</reference>
<sequence>MTAAVQSPTVNTTLNYFREVADGGLSEIRHGTVGSTRMKYNTQPVVVNDIRSNEGEFSLDKQGFQLVTSATKVKAFDEKTVKEQYYEELIDLIKETTGASFVLPMNHLVRQQLWESIHEIPADADDAAIVDTTAAPAMSVHIDQTPEGAELILQMLMQADAGRLGKTRWGIINAWRPLKLIRREPLAVCDVRSVPDSDLRVLGVIYPLPDGMVYNGSSDLKSDTWNVAANPEHKWYYASNMTPDEVLLLKMYDTKLDGRARKCPHSAFKRSYDEGPARESIETRCLVFWEDQERE</sequence>
<organism>
    <name type="scientific">Hormonema carpetanum</name>
    <dbReference type="NCBI Taxonomy" id="284138"/>
    <lineage>
        <taxon>Eukaryota</taxon>
        <taxon>Fungi</taxon>
        <taxon>Dikarya</taxon>
        <taxon>Ascomycota</taxon>
        <taxon>Pezizomycotina</taxon>
        <taxon>Dothideomycetes</taxon>
        <taxon>Dothideomycetidae</taxon>
        <taxon>Dothideales</taxon>
        <taxon>Dothioraceae</taxon>
        <taxon>Hormonema</taxon>
    </lineage>
</organism>
<feature type="chain" id="PRO_0000454464" description="Hydroxylase/desaturase efuI">
    <location>
        <begin position="1"/>
        <end position="295"/>
    </location>
</feature>